<organism>
    <name type="scientific">Pan troglodytes</name>
    <name type="common">Chimpanzee</name>
    <dbReference type="NCBI Taxonomy" id="9598"/>
    <lineage>
        <taxon>Eukaryota</taxon>
        <taxon>Metazoa</taxon>
        <taxon>Chordata</taxon>
        <taxon>Craniata</taxon>
        <taxon>Vertebrata</taxon>
        <taxon>Euteleostomi</taxon>
        <taxon>Mammalia</taxon>
        <taxon>Eutheria</taxon>
        <taxon>Euarchontoglires</taxon>
        <taxon>Primates</taxon>
        <taxon>Haplorrhini</taxon>
        <taxon>Catarrhini</taxon>
        <taxon>Hominidae</taxon>
        <taxon>Pan</taxon>
    </lineage>
</organism>
<sequence length="356" mass="38385">MSRLLHAEEWAEVKELGDHHRQPQPHHLPQPPPPPPPQPPATLQAREHPVYPPELSLLDSTDPRAWLAPTLQGICTARAAQYLLHSPELSASEAAAPRDEVDGRGELVRRSSGGASSSKSPGPVKVREQLCKLKGGVVVDELGCSRQRAPSSKQVNGVQKQRRLAANARERRRMHGLNHAFDQLRNVIPSFNNDKKLSKYETLQMAQIYINALSELLQTPSGGEQPPPPPASCKSDHHHLRTAASYEGGAGNATAAGAQQASGGSQRPTPPGSCRTRFSAPASAGGYSVQLDALHFSTFEDSALTAMMAQKNLSPSLPGSILQPVQEENSKTSPRSHRSDGEFSPHSHYSDSDEAS</sequence>
<proteinExistence type="evidence at transcript level"/>
<feature type="chain" id="PRO_0000127141" description="Transcription factor ATOH1">
    <location>
        <begin position="1"/>
        <end position="356"/>
    </location>
</feature>
<feature type="domain" description="bHLH" evidence="4">
    <location>
        <begin position="161"/>
        <end position="213"/>
    </location>
</feature>
<feature type="region of interest" description="Disordered" evidence="5">
    <location>
        <begin position="1"/>
        <end position="56"/>
    </location>
</feature>
<feature type="region of interest" description="Disordered" evidence="5">
    <location>
        <begin position="92"/>
        <end position="125"/>
    </location>
</feature>
<feature type="region of interest" description="Disordered" evidence="5">
    <location>
        <begin position="218"/>
        <end position="279"/>
    </location>
</feature>
<feature type="region of interest" description="Disordered" evidence="5">
    <location>
        <begin position="314"/>
        <end position="356"/>
    </location>
</feature>
<feature type="compositionally biased region" description="Basic and acidic residues" evidence="5">
    <location>
        <begin position="1"/>
        <end position="21"/>
    </location>
</feature>
<feature type="compositionally biased region" description="Pro residues" evidence="5">
    <location>
        <begin position="26"/>
        <end position="40"/>
    </location>
</feature>
<feature type="compositionally biased region" description="Basic and acidic residues" evidence="5">
    <location>
        <begin position="96"/>
        <end position="109"/>
    </location>
</feature>
<feature type="compositionally biased region" description="Low complexity" evidence="5">
    <location>
        <begin position="110"/>
        <end position="124"/>
    </location>
</feature>
<feature type="compositionally biased region" description="Low complexity" evidence="5">
    <location>
        <begin position="252"/>
        <end position="266"/>
    </location>
</feature>
<feature type="compositionally biased region" description="Basic and acidic residues" evidence="5">
    <location>
        <begin position="337"/>
        <end position="356"/>
    </location>
</feature>
<dbReference type="EMBL" id="AY665249">
    <property type="protein sequence ID" value="AAV74287.1"/>
    <property type="molecule type" value="mRNA"/>
</dbReference>
<dbReference type="RefSeq" id="NP_001012434.1">
    <property type="nucleotide sequence ID" value="NM_001012432.1"/>
</dbReference>
<dbReference type="SMR" id="Q5IS79"/>
<dbReference type="FunCoup" id="Q5IS79">
    <property type="interactions" value="1013"/>
</dbReference>
<dbReference type="STRING" id="9598.ENSPTRP00000053413"/>
<dbReference type="PaxDb" id="9598-ENSPTRP00000053413"/>
<dbReference type="Ensembl" id="ENSPTRT00000060114.3">
    <property type="protein sequence ID" value="ENSPTRP00000053413.3"/>
    <property type="gene ID" value="ENSPTRG00000031141.3"/>
</dbReference>
<dbReference type="GeneID" id="461380"/>
<dbReference type="KEGG" id="ptr:461380"/>
<dbReference type="CTD" id="474"/>
<dbReference type="VGNC" id="VGNC:568">
    <property type="gene designation" value="ATOH1"/>
</dbReference>
<dbReference type="eggNOG" id="KOG4395">
    <property type="taxonomic scope" value="Eukaryota"/>
</dbReference>
<dbReference type="GeneTree" id="ENSGT00940000160064"/>
<dbReference type="InParanoid" id="Q5IS79"/>
<dbReference type="OMA" id="CKNDHHH"/>
<dbReference type="OrthoDB" id="15117at9604"/>
<dbReference type="Proteomes" id="UP000002277">
    <property type="component" value="Chromosome 4"/>
</dbReference>
<dbReference type="Bgee" id="ENSPTRG00000031141">
    <property type="expression patterns" value="Expressed in cerebellar cortex and 1 other cell type or tissue"/>
</dbReference>
<dbReference type="GO" id="GO:0005634">
    <property type="term" value="C:nucleus"/>
    <property type="evidence" value="ECO:0000250"/>
    <property type="project" value="UniProtKB"/>
</dbReference>
<dbReference type="GO" id="GO:0031490">
    <property type="term" value="F:chromatin DNA binding"/>
    <property type="evidence" value="ECO:0007669"/>
    <property type="project" value="Ensembl"/>
</dbReference>
<dbReference type="GO" id="GO:0001228">
    <property type="term" value="F:DNA-binding transcription activator activity, RNA polymerase II-specific"/>
    <property type="evidence" value="ECO:0007669"/>
    <property type="project" value="Ensembl"/>
</dbReference>
<dbReference type="GO" id="GO:0000981">
    <property type="term" value="F:DNA-binding transcription factor activity, RNA polymerase II-specific"/>
    <property type="evidence" value="ECO:0000318"/>
    <property type="project" value="GO_Central"/>
</dbReference>
<dbReference type="GO" id="GO:0070888">
    <property type="term" value="F:E-box binding"/>
    <property type="evidence" value="ECO:0000318"/>
    <property type="project" value="GO_Central"/>
</dbReference>
<dbReference type="GO" id="GO:0046983">
    <property type="term" value="F:protein dimerization activity"/>
    <property type="evidence" value="ECO:0007669"/>
    <property type="project" value="InterPro"/>
</dbReference>
<dbReference type="GO" id="GO:0042668">
    <property type="term" value="P:auditory receptor cell fate determination"/>
    <property type="evidence" value="ECO:0007669"/>
    <property type="project" value="Ensembl"/>
</dbReference>
<dbReference type="GO" id="GO:0042667">
    <property type="term" value="P:auditory receptor cell fate specification"/>
    <property type="evidence" value="ECO:0007669"/>
    <property type="project" value="Ensembl"/>
</dbReference>
<dbReference type="GO" id="GO:0061564">
    <property type="term" value="P:axon development"/>
    <property type="evidence" value="ECO:0000318"/>
    <property type="project" value="GO_Central"/>
</dbReference>
<dbReference type="GO" id="GO:0007411">
    <property type="term" value="P:axon guidance"/>
    <property type="evidence" value="ECO:0007669"/>
    <property type="project" value="Ensembl"/>
</dbReference>
<dbReference type="GO" id="GO:0021953">
    <property type="term" value="P:central nervous system neuron differentiation"/>
    <property type="evidence" value="ECO:0007669"/>
    <property type="project" value="Ensembl"/>
</dbReference>
<dbReference type="GO" id="GO:0021987">
    <property type="term" value="P:cerebral cortex development"/>
    <property type="evidence" value="ECO:0007669"/>
    <property type="project" value="Ensembl"/>
</dbReference>
<dbReference type="GO" id="GO:1904019">
    <property type="term" value="P:epithelial cell apoptotic process"/>
    <property type="evidence" value="ECO:0007669"/>
    <property type="project" value="Ensembl"/>
</dbReference>
<dbReference type="GO" id="GO:0042472">
    <property type="term" value="P:inner ear morphogenesis"/>
    <property type="evidence" value="ECO:0007669"/>
    <property type="project" value="Ensembl"/>
</dbReference>
<dbReference type="GO" id="GO:1904036">
    <property type="term" value="P:negative regulation of epithelial cell apoptotic process"/>
    <property type="evidence" value="ECO:0007669"/>
    <property type="project" value="Ensembl"/>
</dbReference>
<dbReference type="GO" id="GO:0014014">
    <property type="term" value="P:negative regulation of gliogenesis"/>
    <property type="evidence" value="ECO:0007669"/>
    <property type="project" value="Ensembl"/>
</dbReference>
<dbReference type="GO" id="GO:0097402">
    <property type="term" value="P:neuroblast migration"/>
    <property type="evidence" value="ECO:0007669"/>
    <property type="project" value="Ensembl"/>
</dbReference>
<dbReference type="GO" id="GO:0048663">
    <property type="term" value="P:neuron fate commitment"/>
    <property type="evidence" value="ECO:0000318"/>
    <property type="project" value="GO_Central"/>
</dbReference>
<dbReference type="GO" id="GO:0001764">
    <property type="term" value="P:neuron migration"/>
    <property type="evidence" value="ECO:0007669"/>
    <property type="project" value="Ensembl"/>
</dbReference>
<dbReference type="GO" id="GO:0007219">
    <property type="term" value="P:Notch signaling pathway"/>
    <property type="evidence" value="ECO:0007669"/>
    <property type="project" value="Ensembl"/>
</dbReference>
<dbReference type="GO" id="GO:0045609">
    <property type="term" value="P:positive regulation of inner ear auditory receptor cell differentiation"/>
    <property type="evidence" value="ECO:0007669"/>
    <property type="project" value="Ensembl"/>
</dbReference>
<dbReference type="GO" id="GO:0045666">
    <property type="term" value="P:positive regulation of neuron differentiation"/>
    <property type="evidence" value="ECO:0000250"/>
    <property type="project" value="UniProtKB"/>
</dbReference>
<dbReference type="GO" id="GO:0045944">
    <property type="term" value="P:positive regulation of transcription by RNA polymerase II"/>
    <property type="evidence" value="ECO:0000318"/>
    <property type="project" value="GO_Central"/>
</dbReference>
<dbReference type="GO" id="GO:0007423">
    <property type="term" value="P:sensory organ development"/>
    <property type="evidence" value="ECO:0000318"/>
    <property type="project" value="GO_Central"/>
</dbReference>
<dbReference type="GO" id="GO:0006366">
    <property type="term" value="P:transcription by RNA polymerase II"/>
    <property type="evidence" value="ECO:0007669"/>
    <property type="project" value="Ensembl"/>
</dbReference>
<dbReference type="CDD" id="cd19713">
    <property type="entry name" value="bHLH_TS_ATOH1"/>
    <property type="match status" value="1"/>
</dbReference>
<dbReference type="FunFam" id="4.10.280.10:FF:000025">
    <property type="entry name" value="protein atonal homolog 7"/>
    <property type="match status" value="1"/>
</dbReference>
<dbReference type="Gene3D" id="4.10.280.10">
    <property type="entry name" value="Helix-loop-helix DNA-binding domain"/>
    <property type="match status" value="1"/>
</dbReference>
<dbReference type="InterPro" id="IPR032661">
    <property type="entry name" value="ATOH1_bHLH"/>
</dbReference>
<dbReference type="InterPro" id="IPR011598">
    <property type="entry name" value="bHLH_dom"/>
</dbReference>
<dbReference type="InterPro" id="IPR050359">
    <property type="entry name" value="bHLH_transcription_factors"/>
</dbReference>
<dbReference type="InterPro" id="IPR036638">
    <property type="entry name" value="HLH_DNA-bd_sf"/>
</dbReference>
<dbReference type="PANTHER" id="PTHR19290">
    <property type="entry name" value="BASIC HELIX-LOOP-HELIX PROTEIN NEUROGENIN-RELATED"/>
    <property type="match status" value="1"/>
</dbReference>
<dbReference type="PANTHER" id="PTHR19290:SF82">
    <property type="entry name" value="TRANSCRIPTION FACTOR ATOH1"/>
    <property type="match status" value="1"/>
</dbReference>
<dbReference type="Pfam" id="PF00010">
    <property type="entry name" value="HLH"/>
    <property type="match status" value="1"/>
</dbReference>
<dbReference type="SMART" id="SM00353">
    <property type="entry name" value="HLH"/>
    <property type="match status" value="1"/>
</dbReference>
<dbReference type="SUPFAM" id="SSF47459">
    <property type="entry name" value="HLH, helix-loop-helix DNA-binding domain"/>
    <property type="match status" value="1"/>
</dbReference>
<dbReference type="PROSITE" id="PS50888">
    <property type="entry name" value="BHLH"/>
    <property type="match status" value="1"/>
</dbReference>
<keyword id="KW-0010">Activator</keyword>
<keyword id="KW-0217">Developmental protein</keyword>
<keyword id="KW-0221">Differentiation</keyword>
<keyword id="KW-0238">DNA-binding</keyword>
<keyword id="KW-0524">Neurogenesis</keyword>
<keyword id="KW-0539">Nucleus</keyword>
<keyword id="KW-1185">Reference proteome</keyword>
<keyword id="KW-0804">Transcription</keyword>
<keyword id="KW-0805">Transcription regulation</keyword>
<protein>
    <recommendedName>
        <fullName evidence="3">Transcription factor ATOH1</fullName>
    </recommendedName>
    <alternativeName>
        <fullName evidence="3">Atonal bHLH transcription factor 1</fullName>
    </alternativeName>
    <alternativeName>
        <fullName evidence="3">Protein atonal homolog 1</fullName>
    </alternativeName>
</protein>
<reference key="1">
    <citation type="journal article" date="2004" name="Cell">
        <title>Accelerated evolution of nervous system genes in the origin of Homo sapiens.</title>
        <authorList>
            <person name="Dorus S."/>
            <person name="Vallender E.J."/>
            <person name="Evans P.D."/>
            <person name="Anderson J.R."/>
            <person name="Gilbert S.L."/>
            <person name="Mahowald M."/>
            <person name="Wyckoff G.J."/>
            <person name="Malcom C.M."/>
            <person name="Lahn B.T."/>
        </authorList>
    </citation>
    <scope>NUCLEOTIDE SEQUENCE [MRNA]</scope>
</reference>
<name>ATOH1_PANTR</name>
<evidence type="ECO:0000250" key="1"/>
<evidence type="ECO:0000250" key="2">
    <source>
        <dbReference type="UniProtKB" id="P48985"/>
    </source>
</evidence>
<evidence type="ECO:0000250" key="3">
    <source>
        <dbReference type="UniProtKB" id="Q92858"/>
    </source>
</evidence>
<evidence type="ECO:0000255" key="4">
    <source>
        <dbReference type="PROSITE-ProRule" id="PRU00981"/>
    </source>
</evidence>
<evidence type="ECO:0000256" key="5">
    <source>
        <dbReference type="SAM" id="MobiDB-lite"/>
    </source>
</evidence>
<evidence type="ECO:0000305" key="6"/>
<accession>Q5IS79</accession>
<gene>
    <name evidence="3" type="primary">ATOH1</name>
</gene>
<comment type="function">
    <text evidence="2">Transcriptional regulator. Activates E box-dependent transcription in collaboration with TCF3/E47, but the activity is completely antagonized by the negative regulator of neurogenesis HES1. Plays a role in the differentiation of subsets of neural cells by activating E box-dependent transcription (By similarity).</text>
</comment>
<comment type="subunit">
    <text evidence="1">Efficient DNA binding requires dimerization with another bHLH protein.</text>
</comment>
<comment type="subcellular location">
    <subcellularLocation>
        <location evidence="6">Nucleus</location>
    </subcellularLocation>
</comment>